<protein>
    <recommendedName>
        <fullName evidence="1">Putative manganese efflux pump MntP</fullName>
    </recommendedName>
</protein>
<organism>
    <name type="scientific">Syntrophomonas wolfei subsp. wolfei (strain DSM 2245B / Goettingen)</name>
    <dbReference type="NCBI Taxonomy" id="335541"/>
    <lineage>
        <taxon>Bacteria</taxon>
        <taxon>Bacillati</taxon>
        <taxon>Bacillota</taxon>
        <taxon>Clostridia</taxon>
        <taxon>Eubacteriales</taxon>
        <taxon>Syntrophomonadaceae</taxon>
        <taxon>Syntrophomonas</taxon>
    </lineage>
</organism>
<keyword id="KW-1003">Cell membrane</keyword>
<keyword id="KW-0406">Ion transport</keyword>
<keyword id="KW-0464">Manganese</keyword>
<keyword id="KW-0472">Membrane</keyword>
<keyword id="KW-1185">Reference proteome</keyword>
<keyword id="KW-0812">Transmembrane</keyword>
<keyword id="KW-1133">Transmembrane helix</keyword>
<keyword id="KW-0813">Transport</keyword>
<name>MNTP_SYNWW</name>
<feature type="chain" id="PRO_0000296940" description="Putative manganese efflux pump MntP">
    <location>
        <begin position="1"/>
        <end position="195"/>
    </location>
</feature>
<feature type="transmembrane region" description="Helical" evidence="1">
    <location>
        <begin position="4"/>
        <end position="24"/>
    </location>
</feature>
<feature type="transmembrane region" description="Helical" evidence="1">
    <location>
        <begin position="39"/>
        <end position="59"/>
    </location>
</feature>
<feature type="transmembrane region" description="Helical" evidence="1">
    <location>
        <begin position="64"/>
        <end position="84"/>
    </location>
</feature>
<feature type="transmembrane region" description="Helical" evidence="1">
    <location>
        <begin position="120"/>
        <end position="140"/>
    </location>
</feature>
<feature type="transmembrane region" description="Helical" evidence="1">
    <location>
        <begin position="145"/>
        <end position="165"/>
    </location>
</feature>
<feature type="transmembrane region" description="Helical" evidence="1">
    <location>
        <begin position="175"/>
        <end position="195"/>
    </location>
</feature>
<comment type="function">
    <text evidence="1">Probably functions as a manganese efflux pump.</text>
</comment>
<comment type="subcellular location">
    <subcellularLocation>
        <location evidence="1">Cell membrane</location>
        <topology evidence="1">Multi-pass membrane protein</topology>
    </subcellularLocation>
</comment>
<comment type="similarity">
    <text evidence="1">Belongs to the MntP (TC 9.B.29) family.</text>
</comment>
<gene>
    <name evidence="1" type="primary">mntP</name>
    <name type="ordered locus">Swol_2394</name>
</gene>
<accession>Q0AUC1</accession>
<sequence>MIEILITIILLAIVLGMDALSLAMGMGLRGVAKDYEKKFVLTVGILHVLMPLLGLNLGLVAGRFLGVWATRLGALVLVYLGWQMLSKGYAEIQPQRYNFAEAKTILAGKQQSTLDSWTSILLLGLSVSIDALTVGFTLGTLKMPILITVLIMGLIAASMSWVGFAGGRVLGRLTGSYAQILGGVVLLALAIKFVV</sequence>
<evidence type="ECO:0000255" key="1">
    <source>
        <dbReference type="HAMAP-Rule" id="MF_01521"/>
    </source>
</evidence>
<reference key="1">
    <citation type="journal article" date="2010" name="Environ. Microbiol.">
        <title>The genome of Syntrophomonas wolfei: new insights into syntrophic metabolism and biohydrogen production.</title>
        <authorList>
            <person name="Sieber J.R."/>
            <person name="Sims D.R."/>
            <person name="Han C."/>
            <person name="Kim E."/>
            <person name="Lykidis A."/>
            <person name="Lapidus A.L."/>
            <person name="McDonnald E."/>
            <person name="Rohlin L."/>
            <person name="Culley D.E."/>
            <person name="Gunsalus R."/>
            <person name="McInerney M.J."/>
        </authorList>
    </citation>
    <scope>NUCLEOTIDE SEQUENCE [LARGE SCALE GENOMIC DNA]</scope>
    <source>
        <strain>DSM 2245B / Goettingen</strain>
    </source>
</reference>
<dbReference type="EMBL" id="CP000448">
    <property type="protein sequence ID" value="ABI69683.1"/>
    <property type="molecule type" value="Genomic_DNA"/>
</dbReference>
<dbReference type="RefSeq" id="WP_011641767.1">
    <property type="nucleotide sequence ID" value="NC_008346.1"/>
</dbReference>
<dbReference type="STRING" id="335541.Swol_2394"/>
<dbReference type="KEGG" id="swo:Swol_2394"/>
<dbReference type="eggNOG" id="COG1971">
    <property type="taxonomic scope" value="Bacteria"/>
</dbReference>
<dbReference type="HOGENOM" id="CLU_096410_1_1_9"/>
<dbReference type="OrthoDB" id="1679700at2"/>
<dbReference type="Proteomes" id="UP000001968">
    <property type="component" value="Chromosome"/>
</dbReference>
<dbReference type="GO" id="GO:0005886">
    <property type="term" value="C:plasma membrane"/>
    <property type="evidence" value="ECO:0007669"/>
    <property type="project" value="UniProtKB-SubCell"/>
</dbReference>
<dbReference type="GO" id="GO:0005384">
    <property type="term" value="F:manganese ion transmembrane transporter activity"/>
    <property type="evidence" value="ECO:0007669"/>
    <property type="project" value="UniProtKB-UniRule"/>
</dbReference>
<dbReference type="HAMAP" id="MF_01521">
    <property type="entry name" value="MntP_pump"/>
    <property type="match status" value="1"/>
</dbReference>
<dbReference type="InterPro" id="IPR003810">
    <property type="entry name" value="Mntp/YtaF"/>
</dbReference>
<dbReference type="InterPro" id="IPR022929">
    <property type="entry name" value="Put_MntP"/>
</dbReference>
<dbReference type="PANTHER" id="PTHR35529">
    <property type="entry name" value="MANGANESE EFFLUX PUMP MNTP-RELATED"/>
    <property type="match status" value="1"/>
</dbReference>
<dbReference type="PANTHER" id="PTHR35529:SF1">
    <property type="entry name" value="MANGANESE EFFLUX PUMP MNTP-RELATED"/>
    <property type="match status" value="1"/>
</dbReference>
<dbReference type="Pfam" id="PF02659">
    <property type="entry name" value="Mntp"/>
    <property type="match status" value="1"/>
</dbReference>
<proteinExistence type="inferred from homology"/>